<gene>
    <name evidence="1" type="primary">scpB</name>
    <name type="ordered locus">SPy_0367</name>
    <name type="ordered locus">M5005_Spy0309</name>
</gene>
<protein>
    <recommendedName>
        <fullName evidence="1">Segregation and condensation protein B</fullName>
    </recommendedName>
</protein>
<proteinExistence type="inferred from homology"/>
<keyword id="KW-0131">Cell cycle</keyword>
<keyword id="KW-0132">Cell division</keyword>
<keyword id="KW-0159">Chromosome partition</keyword>
<keyword id="KW-0963">Cytoplasm</keyword>
<keyword id="KW-1185">Reference proteome</keyword>
<feature type="chain" id="PRO_0000211161" description="Segregation and condensation protein B">
    <location>
        <begin position="1"/>
        <end position="183"/>
    </location>
</feature>
<dbReference type="EMBL" id="AE004092">
    <property type="protein sequence ID" value="AAK33412.1"/>
    <property type="molecule type" value="Genomic_DNA"/>
</dbReference>
<dbReference type="EMBL" id="CP000017">
    <property type="protein sequence ID" value="AAZ50928.1"/>
    <property type="molecule type" value="Genomic_DNA"/>
</dbReference>
<dbReference type="RefSeq" id="NP_268691.1">
    <property type="nucleotide sequence ID" value="NC_002737.2"/>
</dbReference>
<dbReference type="SMR" id="P60220"/>
<dbReference type="PaxDb" id="1314-HKU360_00345"/>
<dbReference type="KEGG" id="spy:SPy_0367"/>
<dbReference type="KEGG" id="spz:M5005_Spy0309"/>
<dbReference type="PATRIC" id="fig|160490.10.peg.318"/>
<dbReference type="HOGENOM" id="CLU_045647_5_3_9"/>
<dbReference type="OMA" id="PGHPKLY"/>
<dbReference type="Proteomes" id="UP000000750">
    <property type="component" value="Chromosome"/>
</dbReference>
<dbReference type="GO" id="GO:0005737">
    <property type="term" value="C:cytoplasm"/>
    <property type="evidence" value="ECO:0007669"/>
    <property type="project" value="UniProtKB-SubCell"/>
</dbReference>
<dbReference type="GO" id="GO:0051301">
    <property type="term" value="P:cell division"/>
    <property type="evidence" value="ECO:0007669"/>
    <property type="project" value="UniProtKB-KW"/>
</dbReference>
<dbReference type="GO" id="GO:0051304">
    <property type="term" value="P:chromosome separation"/>
    <property type="evidence" value="ECO:0007669"/>
    <property type="project" value="InterPro"/>
</dbReference>
<dbReference type="GO" id="GO:0006260">
    <property type="term" value="P:DNA replication"/>
    <property type="evidence" value="ECO:0007669"/>
    <property type="project" value="UniProtKB-UniRule"/>
</dbReference>
<dbReference type="Gene3D" id="1.10.10.10">
    <property type="entry name" value="Winged helix-like DNA-binding domain superfamily/Winged helix DNA-binding domain"/>
    <property type="match status" value="2"/>
</dbReference>
<dbReference type="HAMAP" id="MF_01804">
    <property type="entry name" value="ScpB"/>
    <property type="match status" value="1"/>
</dbReference>
<dbReference type="InterPro" id="IPR005234">
    <property type="entry name" value="ScpB_csome_segregation"/>
</dbReference>
<dbReference type="InterPro" id="IPR036388">
    <property type="entry name" value="WH-like_DNA-bd_sf"/>
</dbReference>
<dbReference type="InterPro" id="IPR036390">
    <property type="entry name" value="WH_DNA-bd_sf"/>
</dbReference>
<dbReference type="NCBIfam" id="TIGR00281">
    <property type="entry name" value="SMC-Scp complex subunit ScpB"/>
    <property type="match status" value="1"/>
</dbReference>
<dbReference type="PANTHER" id="PTHR34298">
    <property type="entry name" value="SEGREGATION AND CONDENSATION PROTEIN B"/>
    <property type="match status" value="1"/>
</dbReference>
<dbReference type="PANTHER" id="PTHR34298:SF2">
    <property type="entry name" value="SEGREGATION AND CONDENSATION PROTEIN B"/>
    <property type="match status" value="1"/>
</dbReference>
<dbReference type="Pfam" id="PF04079">
    <property type="entry name" value="SMC_ScpB"/>
    <property type="match status" value="1"/>
</dbReference>
<dbReference type="PIRSF" id="PIRSF019345">
    <property type="entry name" value="ScpB"/>
    <property type="match status" value="1"/>
</dbReference>
<dbReference type="SUPFAM" id="SSF46785">
    <property type="entry name" value="Winged helix' DNA-binding domain"/>
    <property type="match status" value="2"/>
</dbReference>
<reference key="1">
    <citation type="journal article" date="2001" name="Proc. Natl. Acad. Sci. U.S.A.">
        <title>Complete genome sequence of an M1 strain of Streptococcus pyogenes.</title>
        <authorList>
            <person name="Ferretti J.J."/>
            <person name="McShan W.M."/>
            <person name="Ajdic D.J."/>
            <person name="Savic D.J."/>
            <person name="Savic G."/>
            <person name="Lyon K."/>
            <person name="Primeaux C."/>
            <person name="Sezate S."/>
            <person name="Suvorov A.N."/>
            <person name="Kenton S."/>
            <person name="Lai H.S."/>
            <person name="Lin S.P."/>
            <person name="Qian Y."/>
            <person name="Jia H.G."/>
            <person name="Najar F.Z."/>
            <person name="Ren Q."/>
            <person name="Zhu H."/>
            <person name="Song L."/>
            <person name="White J."/>
            <person name="Yuan X."/>
            <person name="Clifton S.W."/>
            <person name="Roe B.A."/>
            <person name="McLaughlin R.E."/>
        </authorList>
    </citation>
    <scope>NUCLEOTIDE SEQUENCE [LARGE SCALE GENOMIC DNA]</scope>
    <source>
        <strain>ATCC 700294 / SF370 / Serotype M1</strain>
    </source>
</reference>
<reference key="2">
    <citation type="journal article" date="2005" name="J. Infect. Dis.">
        <title>Evolutionary origin and emergence of a highly successful clone of serotype M1 group A Streptococcus involved multiple horizontal gene transfer events.</title>
        <authorList>
            <person name="Sumby P."/>
            <person name="Porcella S.F."/>
            <person name="Madrigal A.G."/>
            <person name="Barbian K.D."/>
            <person name="Virtaneva K."/>
            <person name="Ricklefs S.M."/>
            <person name="Sturdevant D.E."/>
            <person name="Graham M.R."/>
            <person name="Vuopio-Varkila J."/>
            <person name="Hoe N.P."/>
            <person name="Musser J.M."/>
        </authorList>
    </citation>
    <scope>NUCLEOTIDE SEQUENCE [LARGE SCALE GENOMIC DNA]</scope>
    <source>
        <strain>ATCC BAA-947 / MGAS5005 / Serotype M1</strain>
    </source>
</reference>
<comment type="function">
    <text evidence="1">Participates in chromosomal partition during cell division. May act via the formation of a condensin-like complex containing Smc and ScpA that pull DNA away from mid-cell into both cell halves.</text>
</comment>
<comment type="subunit">
    <text evidence="1">Homodimer. Homodimerization may be required to stabilize the binding of ScpA to the Smc head domains. Component of a cohesin-like complex composed of ScpA, ScpB and the Smc homodimer, in which ScpA and ScpB bind to the head domain of Smc. The presence of the three proteins is required for the association of the complex with DNA.</text>
</comment>
<comment type="subcellular location">
    <subcellularLocation>
        <location evidence="1">Cytoplasm</location>
    </subcellularLocation>
    <text evidence="1">Associated with two foci at the outer edges of the nucleoid region in young cells, and at four foci within both cell halves in older cells.</text>
</comment>
<comment type="similarity">
    <text evidence="1">Belongs to the ScpB family.</text>
</comment>
<organism>
    <name type="scientific">Streptococcus pyogenes serotype M1</name>
    <dbReference type="NCBI Taxonomy" id="301447"/>
    <lineage>
        <taxon>Bacteria</taxon>
        <taxon>Bacillati</taxon>
        <taxon>Bacillota</taxon>
        <taxon>Bacilli</taxon>
        <taxon>Lactobacillales</taxon>
        <taxon>Streptococcaceae</taxon>
        <taxon>Streptococcus</taxon>
    </lineage>
</organism>
<sequence length="183" mass="20495">MTYLSQIEALLFVAGEEGLSLRHLASMLSLTPTALQQQLEKLSQKYEKDQHSSLCLIETANTYRLVTKEGFAELLRAYAKTPMNQSLSRASLEVLSIVAYKQPITRIEIDDIRGVNSSGALSKLLAFDLIREAGKKDVVGRPHLYATTDYFLDYMGINHLDELIEVSAVEPADEEIALFRTQD</sequence>
<accession>P60220</accession>
<accession>Q490P0</accession>
<accession>Q9A1B1</accession>
<name>SCPB_STRP1</name>
<evidence type="ECO:0000255" key="1">
    <source>
        <dbReference type="HAMAP-Rule" id="MF_01804"/>
    </source>
</evidence>